<comment type="PTM">
    <text evidence="1">The N-terminus is cleaved by ribosomal processing cysteine protease Prp.</text>
</comment>
<comment type="similarity">
    <text evidence="2">Belongs to the bacterial ribosomal protein bL27 family.</text>
</comment>
<dbReference type="EMBL" id="FM204883">
    <property type="protein sequence ID" value="CAW94113.1"/>
    <property type="molecule type" value="Genomic_DNA"/>
</dbReference>
<dbReference type="RefSeq" id="WP_012679670.1">
    <property type="nucleotide sequence ID" value="NC_012471.1"/>
</dbReference>
<dbReference type="SMR" id="C0M7I0"/>
<dbReference type="KEGG" id="seu:SEQ_1322"/>
<dbReference type="HOGENOM" id="CLU_095424_4_0_9"/>
<dbReference type="OrthoDB" id="9803474at2"/>
<dbReference type="Proteomes" id="UP000001365">
    <property type="component" value="Chromosome"/>
</dbReference>
<dbReference type="GO" id="GO:0022625">
    <property type="term" value="C:cytosolic large ribosomal subunit"/>
    <property type="evidence" value="ECO:0007669"/>
    <property type="project" value="TreeGrafter"/>
</dbReference>
<dbReference type="GO" id="GO:0003735">
    <property type="term" value="F:structural constituent of ribosome"/>
    <property type="evidence" value="ECO:0007669"/>
    <property type="project" value="InterPro"/>
</dbReference>
<dbReference type="GO" id="GO:0006412">
    <property type="term" value="P:translation"/>
    <property type="evidence" value="ECO:0007669"/>
    <property type="project" value="UniProtKB-UniRule"/>
</dbReference>
<dbReference type="FunFam" id="2.40.50.100:FF:000004">
    <property type="entry name" value="50S ribosomal protein L27"/>
    <property type="match status" value="1"/>
</dbReference>
<dbReference type="Gene3D" id="2.40.50.100">
    <property type="match status" value="1"/>
</dbReference>
<dbReference type="HAMAP" id="MF_00539">
    <property type="entry name" value="Ribosomal_bL27"/>
    <property type="match status" value="1"/>
</dbReference>
<dbReference type="InterPro" id="IPR001684">
    <property type="entry name" value="Ribosomal_bL27"/>
</dbReference>
<dbReference type="InterPro" id="IPR018261">
    <property type="entry name" value="Ribosomal_bL27_CS"/>
</dbReference>
<dbReference type="NCBIfam" id="TIGR00062">
    <property type="entry name" value="L27"/>
    <property type="match status" value="1"/>
</dbReference>
<dbReference type="PANTHER" id="PTHR15893:SF0">
    <property type="entry name" value="LARGE RIBOSOMAL SUBUNIT PROTEIN BL27M"/>
    <property type="match status" value="1"/>
</dbReference>
<dbReference type="PANTHER" id="PTHR15893">
    <property type="entry name" value="RIBOSOMAL PROTEIN L27"/>
    <property type="match status" value="1"/>
</dbReference>
<dbReference type="Pfam" id="PF01016">
    <property type="entry name" value="Ribosomal_L27"/>
    <property type="match status" value="1"/>
</dbReference>
<dbReference type="PRINTS" id="PR00063">
    <property type="entry name" value="RIBOSOMALL27"/>
</dbReference>
<dbReference type="SUPFAM" id="SSF110324">
    <property type="entry name" value="Ribosomal L27 protein-like"/>
    <property type="match status" value="1"/>
</dbReference>
<dbReference type="PROSITE" id="PS00831">
    <property type="entry name" value="RIBOSOMAL_L27"/>
    <property type="match status" value="1"/>
</dbReference>
<proteinExistence type="inferred from homology"/>
<gene>
    <name evidence="2" type="primary">rpmA</name>
    <name type="ordered locus">SEQ_1322</name>
</gene>
<evidence type="ECO:0000250" key="1">
    <source>
        <dbReference type="UniProtKB" id="Q2FXT0"/>
    </source>
</evidence>
<evidence type="ECO:0000255" key="2">
    <source>
        <dbReference type="HAMAP-Rule" id="MF_00539"/>
    </source>
</evidence>
<evidence type="ECO:0000256" key="3">
    <source>
        <dbReference type="SAM" id="MobiDB-lite"/>
    </source>
</evidence>
<evidence type="ECO:0000305" key="4"/>
<sequence>MIKLNLSNLQHFAHKKGGGSTSNGRDSQAKRLGAKAADGQTVSGGSILYRQRGTHIYPGVNVGRGGDDTLFAKVEGVVRFERKGRDKKQVSVYPIAK</sequence>
<accession>C0M7I0</accession>
<name>RL27_STRE4</name>
<protein>
    <recommendedName>
        <fullName evidence="2">Large ribosomal subunit protein bL27</fullName>
    </recommendedName>
    <alternativeName>
        <fullName evidence="4">50S ribosomal protein L27</fullName>
    </alternativeName>
</protein>
<reference key="1">
    <citation type="journal article" date="2009" name="PLoS Pathog.">
        <title>Genomic evidence for the evolution of Streptococcus equi: host restriction, increased virulence, and genetic exchange with human pathogens.</title>
        <authorList>
            <person name="Holden M.T.G."/>
            <person name="Heather Z."/>
            <person name="Paillot R."/>
            <person name="Steward K.F."/>
            <person name="Webb K."/>
            <person name="Ainslie F."/>
            <person name="Jourdan T."/>
            <person name="Bason N.C."/>
            <person name="Holroyd N.E."/>
            <person name="Mungall K."/>
            <person name="Quail M.A."/>
            <person name="Sanders M."/>
            <person name="Simmonds M."/>
            <person name="Willey D."/>
            <person name="Brooks K."/>
            <person name="Aanensen D.M."/>
            <person name="Spratt B.G."/>
            <person name="Jolley K.A."/>
            <person name="Maiden M.C.J."/>
            <person name="Kehoe M."/>
            <person name="Chanter N."/>
            <person name="Bentley S.D."/>
            <person name="Robinson C."/>
            <person name="Maskell D.J."/>
            <person name="Parkhill J."/>
            <person name="Waller A.S."/>
        </authorList>
    </citation>
    <scope>NUCLEOTIDE SEQUENCE [LARGE SCALE GENOMIC DNA]</scope>
    <source>
        <strain>4047</strain>
    </source>
</reference>
<organism>
    <name type="scientific">Streptococcus equi subsp. equi (strain 4047)</name>
    <dbReference type="NCBI Taxonomy" id="553482"/>
    <lineage>
        <taxon>Bacteria</taxon>
        <taxon>Bacillati</taxon>
        <taxon>Bacillota</taxon>
        <taxon>Bacilli</taxon>
        <taxon>Lactobacillales</taxon>
        <taxon>Streptococcaceae</taxon>
        <taxon>Streptococcus</taxon>
    </lineage>
</organism>
<keyword id="KW-0687">Ribonucleoprotein</keyword>
<keyword id="KW-0689">Ribosomal protein</keyword>
<feature type="propeptide" id="PRO_0000459947" evidence="1">
    <location>
        <begin position="1"/>
        <end position="12"/>
    </location>
</feature>
<feature type="chain" id="PRO_1000195887" description="Large ribosomal subunit protein bL27">
    <location>
        <begin position="13"/>
        <end position="97"/>
    </location>
</feature>
<feature type="region of interest" description="Disordered" evidence="3">
    <location>
        <begin position="13"/>
        <end position="38"/>
    </location>
</feature>